<name>CBID_PARM1</name>
<gene>
    <name evidence="1" type="primary">cbiD</name>
    <name type="ordered locus">amb2642</name>
</gene>
<comment type="function">
    <text evidence="1">Catalyzes the methylation of C-1 in cobalt-precorrin-5B to form cobalt-precorrin-6A.</text>
</comment>
<comment type="catalytic activity">
    <reaction evidence="1">
        <text>Co-precorrin-5B + S-adenosyl-L-methionine = Co-precorrin-6A + S-adenosyl-L-homocysteine</text>
        <dbReference type="Rhea" id="RHEA:26285"/>
        <dbReference type="ChEBI" id="CHEBI:57856"/>
        <dbReference type="ChEBI" id="CHEBI:59789"/>
        <dbReference type="ChEBI" id="CHEBI:60063"/>
        <dbReference type="ChEBI" id="CHEBI:60064"/>
        <dbReference type="EC" id="2.1.1.195"/>
    </reaction>
</comment>
<comment type="pathway">
    <text evidence="1">Cofactor biosynthesis; adenosylcobalamin biosynthesis; cob(II)yrinate a,c-diamide from sirohydrochlorin (anaerobic route): step 6/10.</text>
</comment>
<comment type="similarity">
    <text evidence="1">Belongs to the CbiD family.</text>
</comment>
<evidence type="ECO:0000255" key="1">
    <source>
        <dbReference type="HAMAP-Rule" id="MF_00787"/>
    </source>
</evidence>
<sequence length="357" mass="36765">MADEQALRQGWTTGACATAAAKAACCALLGDGFPDPVGIDLPGGRTPAFALALAEMGEGWARAGIVKDAGDDPDVTHGATIIATLRHGIAGAGLVFRAGRGVGIVTRPGLPLAVGEPAINPVPRRLMAEAVAAIAARHGMACDLEIEISVPGGEDIALRTWNPRLGILGGISILGTTGVVIPYSCSAWIHSIQRGIDVARACGLIHVAGCVGSTSEKAVRKVRGLGEEAIIDMGDFAGGMLKYLRRHPIPRVTIAGGFAKMCKLAAGQMDLHSSRSQVDMVWLAAQLRSLGADAALVAASAQANTALEVLELAEGFPLGQAIARQARAAAREVLDNPEVSLDVLVVDRQGRVIGDAH</sequence>
<dbReference type="EC" id="2.1.1.195" evidence="1"/>
<dbReference type="EMBL" id="AP007255">
    <property type="protein sequence ID" value="BAE51446.1"/>
    <property type="molecule type" value="Genomic_DNA"/>
</dbReference>
<dbReference type="RefSeq" id="WP_011385022.1">
    <property type="nucleotide sequence ID" value="NC_007626.1"/>
</dbReference>
<dbReference type="SMR" id="Q2W3X9"/>
<dbReference type="STRING" id="342108.amb2642"/>
<dbReference type="KEGG" id="mag:amb2642"/>
<dbReference type="HOGENOM" id="CLU_041273_0_0_5"/>
<dbReference type="OrthoDB" id="6439987at2"/>
<dbReference type="UniPathway" id="UPA00148">
    <property type="reaction ID" value="UER00227"/>
</dbReference>
<dbReference type="Proteomes" id="UP000007058">
    <property type="component" value="Chromosome"/>
</dbReference>
<dbReference type="GO" id="GO:0043780">
    <property type="term" value="F:cobalt-precorrin-5B C1-methyltransferase activity"/>
    <property type="evidence" value="ECO:0007669"/>
    <property type="project" value="RHEA"/>
</dbReference>
<dbReference type="GO" id="GO:0019251">
    <property type="term" value="P:anaerobic cobalamin biosynthetic process"/>
    <property type="evidence" value="ECO:0007669"/>
    <property type="project" value="UniProtKB-UniRule"/>
</dbReference>
<dbReference type="GO" id="GO:0032259">
    <property type="term" value="P:methylation"/>
    <property type="evidence" value="ECO:0007669"/>
    <property type="project" value="UniProtKB-KW"/>
</dbReference>
<dbReference type="Gene3D" id="3.30.2110.10">
    <property type="entry name" value="CbiD-like"/>
    <property type="match status" value="1"/>
</dbReference>
<dbReference type="HAMAP" id="MF_00787">
    <property type="entry name" value="CbiD"/>
    <property type="match status" value="1"/>
</dbReference>
<dbReference type="InterPro" id="IPR002748">
    <property type="entry name" value="CbiD"/>
</dbReference>
<dbReference type="InterPro" id="IPR036074">
    <property type="entry name" value="CbiD_sf"/>
</dbReference>
<dbReference type="NCBIfam" id="TIGR00312">
    <property type="entry name" value="cbiD"/>
    <property type="match status" value="1"/>
</dbReference>
<dbReference type="NCBIfam" id="NF000849">
    <property type="entry name" value="PRK00075.1-1"/>
    <property type="match status" value="1"/>
</dbReference>
<dbReference type="PANTHER" id="PTHR35863">
    <property type="entry name" value="COBALT-PRECORRIN-5B C(1)-METHYLTRANSFERASE"/>
    <property type="match status" value="1"/>
</dbReference>
<dbReference type="PANTHER" id="PTHR35863:SF1">
    <property type="entry name" value="COBALT-PRECORRIN-5B C(1)-METHYLTRANSFERASE"/>
    <property type="match status" value="1"/>
</dbReference>
<dbReference type="Pfam" id="PF01888">
    <property type="entry name" value="CbiD"/>
    <property type="match status" value="1"/>
</dbReference>
<dbReference type="PIRSF" id="PIRSF026782">
    <property type="entry name" value="CbiD"/>
    <property type="match status" value="1"/>
</dbReference>
<dbReference type="SUPFAM" id="SSF111342">
    <property type="entry name" value="CbiD-like"/>
    <property type="match status" value="1"/>
</dbReference>
<organism>
    <name type="scientific">Paramagnetospirillum magneticum (strain ATCC 700264 / AMB-1)</name>
    <name type="common">Magnetospirillum magneticum</name>
    <dbReference type="NCBI Taxonomy" id="342108"/>
    <lineage>
        <taxon>Bacteria</taxon>
        <taxon>Pseudomonadati</taxon>
        <taxon>Pseudomonadota</taxon>
        <taxon>Alphaproteobacteria</taxon>
        <taxon>Rhodospirillales</taxon>
        <taxon>Magnetospirillaceae</taxon>
        <taxon>Paramagnetospirillum</taxon>
    </lineage>
</organism>
<proteinExistence type="inferred from homology"/>
<feature type="chain" id="PRO_0000257765" description="Cobalt-precorrin-5B C(1)-methyltransferase">
    <location>
        <begin position="1"/>
        <end position="357"/>
    </location>
</feature>
<keyword id="KW-0169">Cobalamin biosynthesis</keyword>
<keyword id="KW-0489">Methyltransferase</keyword>
<keyword id="KW-0949">S-adenosyl-L-methionine</keyword>
<keyword id="KW-0808">Transferase</keyword>
<protein>
    <recommendedName>
        <fullName evidence="1">Cobalt-precorrin-5B C(1)-methyltransferase</fullName>
        <ecNumber evidence="1">2.1.1.195</ecNumber>
    </recommendedName>
    <alternativeName>
        <fullName evidence="1">Cobalt-precorrin-6A synthase</fullName>
    </alternativeName>
</protein>
<reference key="1">
    <citation type="journal article" date="2005" name="DNA Res.">
        <title>Complete genome sequence of the facultative anaerobic magnetotactic bacterium Magnetospirillum sp. strain AMB-1.</title>
        <authorList>
            <person name="Matsunaga T."/>
            <person name="Okamura Y."/>
            <person name="Fukuda Y."/>
            <person name="Wahyudi A.T."/>
            <person name="Murase Y."/>
            <person name="Takeyama H."/>
        </authorList>
    </citation>
    <scope>NUCLEOTIDE SEQUENCE [LARGE SCALE GENOMIC DNA]</scope>
    <source>
        <strain>ATCC 700264 / AMB-1</strain>
    </source>
</reference>
<accession>Q2W3X9</accession>